<accession>Q2EI26</accession>
<dbReference type="EC" id="3.4.24.-"/>
<dbReference type="EMBL" id="DQ377325">
    <property type="protein sequence ID" value="ABD23012.1"/>
    <property type="molecule type" value="mRNA"/>
</dbReference>
<dbReference type="SMR" id="Q2EI26"/>
<dbReference type="MEROPS" id="M12.131"/>
<dbReference type="GO" id="GO:0005576">
    <property type="term" value="C:extracellular region"/>
    <property type="evidence" value="ECO:0007669"/>
    <property type="project" value="UniProtKB-SubCell"/>
</dbReference>
<dbReference type="GO" id="GO:0005886">
    <property type="term" value="C:plasma membrane"/>
    <property type="evidence" value="ECO:0007669"/>
    <property type="project" value="TreeGrafter"/>
</dbReference>
<dbReference type="GO" id="GO:0046872">
    <property type="term" value="F:metal ion binding"/>
    <property type="evidence" value="ECO:0007669"/>
    <property type="project" value="UniProtKB-KW"/>
</dbReference>
<dbReference type="GO" id="GO:0004222">
    <property type="term" value="F:metalloendopeptidase activity"/>
    <property type="evidence" value="ECO:0007669"/>
    <property type="project" value="InterPro"/>
</dbReference>
<dbReference type="GO" id="GO:0016504">
    <property type="term" value="F:peptidase activator activity"/>
    <property type="evidence" value="ECO:0007669"/>
    <property type="project" value="UniProtKB-KW"/>
</dbReference>
<dbReference type="GO" id="GO:0090729">
    <property type="term" value="F:toxin activity"/>
    <property type="evidence" value="ECO:0007669"/>
    <property type="project" value="UniProtKB-KW"/>
</dbReference>
<dbReference type="GO" id="GO:0006508">
    <property type="term" value="P:proteolysis"/>
    <property type="evidence" value="ECO:0007669"/>
    <property type="project" value="UniProtKB-KW"/>
</dbReference>
<dbReference type="CDD" id="cd04269">
    <property type="entry name" value="ZnMc_adamalysin_II_like"/>
    <property type="match status" value="1"/>
</dbReference>
<dbReference type="FunFam" id="3.40.390.10:FF:000002">
    <property type="entry name" value="Disintegrin and metalloproteinase domain-containing protein 22"/>
    <property type="match status" value="1"/>
</dbReference>
<dbReference type="Gene3D" id="3.40.390.10">
    <property type="entry name" value="Collagenase (Catalytic Domain)"/>
    <property type="match status" value="1"/>
</dbReference>
<dbReference type="InterPro" id="IPR024079">
    <property type="entry name" value="MetalloPept_cat_dom_sf"/>
</dbReference>
<dbReference type="InterPro" id="IPR001590">
    <property type="entry name" value="Peptidase_M12B"/>
</dbReference>
<dbReference type="InterPro" id="IPR002870">
    <property type="entry name" value="Peptidase_M12B_N"/>
</dbReference>
<dbReference type="InterPro" id="IPR034027">
    <property type="entry name" value="Reprolysin_adamalysin"/>
</dbReference>
<dbReference type="PANTHER" id="PTHR11905">
    <property type="entry name" value="ADAM A DISINTEGRIN AND METALLOPROTEASE DOMAIN"/>
    <property type="match status" value="1"/>
</dbReference>
<dbReference type="PANTHER" id="PTHR11905:SF32">
    <property type="entry name" value="DISINTEGRIN AND METALLOPROTEINASE DOMAIN-CONTAINING PROTEIN 28"/>
    <property type="match status" value="1"/>
</dbReference>
<dbReference type="Pfam" id="PF01562">
    <property type="entry name" value="Pep_M12B_propep"/>
    <property type="match status" value="1"/>
</dbReference>
<dbReference type="Pfam" id="PF01421">
    <property type="entry name" value="Reprolysin"/>
    <property type="match status" value="1"/>
</dbReference>
<dbReference type="SUPFAM" id="SSF55486">
    <property type="entry name" value="Metalloproteases ('zincins'), catalytic domain"/>
    <property type="match status" value="1"/>
</dbReference>
<dbReference type="PROSITE" id="PS50215">
    <property type="entry name" value="ADAM_MEPRO"/>
    <property type="match status" value="1"/>
</dbReference>
<dbReference type="PROSITE" id="PS00142">
    <property type="entry name" value="ZINC_PROTEASE"/>
    <property type="match status" value="1"/>
</dbReference>
<reference key="1">
    <citation type="submission" date="2006-01" db="EMBL/GenBank/DDBJ databases">
        <title>AaPA, a novel type of prothrombin activator from the venom of Agkistrodon acutus.</title>
        <authorList>
            <person name="Jiao H."/>
            <person name="Tan C."/>
            <person name="Ruan K."/>
            <person name="Zhou Y."/>
        </authorList>
    </citation>
    <scope>NUCLEOTIDE SEQUENCE [MRNA]</scope>
    <source>
        <tissue>Venom gland</tissue>
    </source>
</reference>
<protein>
    <recommendedName>
        <fullName>Snake venom metalloproteinase AaPA</fullName>
        <shortName>SVMP</shortName>
        <ecNumber>3.4.24.-</ecNumber>
    </recommendedName>
    <alternativeName>
        <fullName>Agkistrodon acutus prothrombin activator</fullName>
    </alternativeName>
</protein>
<name>VM1PA_DEIAC</name>
<organism>
    <name type="scientific">Deinagkistrodon acutus</name>
    <name type="common">Hundred-pace snake</name>
    <name type="synonym">Agkistrodon acutus</name>
    <dbReference type="NCBI Taxonomy" id="36307"/>
    <lineage>
        <taxon>Eukaryota</taxon>
        <taxon>Metazoa</taxon>
        <taxon>Chordata</taxon>
        <taxon>Craniata</taxon>
        <taxon>Vertebrata</taxon>
        <taxon>Euteleostomi</taxon>
        <taxon>Lepidosauria</taxon>
        <taxon>Squamata</taxon>
        <taxon>Bifurcata</taxon>
        <taxon>Unidentata</taxon>
        <taxon>Episquamata</taxon>
        <taxon>Toxicofera</taxon>
        <taxon>Serpentes</taxon>
        <taxon>Colubroidea</taxon>
        <taxon>Viperidae</taxon>
        <taxon>Crotalinae</taxon>
        <taxon>Deinagkistrodon</taxon>
    </lineage>
</organism>
<sequence length="413" mass="46758">MIQVLLVTICLAAFPYQGSSIILESGKVNDYEVVYPQRLAPLPEGAVQQKYEDTMQYEFKVNGEPVVLHLEKNKGLFSKDYSEIHYSPDGRRITTHPLVEDHCYYRGHIRNDADSTASISACHGLKGHFKLRGETYLIEPMKISNSEAHAVYKYENVEKEDEAHKMCGVTQNWESYEPIKKASQLIVSTEFQRYMEIVIVVDHSMVKKYNGDSDKIKAWVYEMINTITESYSYLYIDIILSGLEIWSEKDLINVETSAENTLKSFGEWRAKDLIHRISHDNAQLLTATDFDGPTIGLAYVASMCDPKRSVGVVQDHSSVNRLVAITLAHEMAHNLGVRHDEGSCSCGSGYTCIMSPVINSEVIKYFSDCSYIQCREYISKENPPCILNKPLRTDTVSTPVSGNELLEAEKDYD</sequence>
<keyword id="KW-1204">Blood coagulation cascade activating toxin</keyword>
<keyword id="KW-0106">Calcium</keyword>
<keyword id="KW-1015">Disulfide bond</keyword>
<keyword id="KW-1199">Hemostasis impairing toxin</keyword>
<keyword id="KW-0378">Hydrolase</keyword>
<keyword id="KW-0479">Metal-binding</keyword>
<keyword id="KW-0482">Metalloprotease</keyword>
<keyword id="KW-0645">Protease</keyword>
<keyword id="KW-0655">Prothrombin activator</keyword>
<keyword id="KW-0964">Secreted</keyword>
<keyword id="KW-0732">Signal</keyword>
<keyword id="KW-0800">Toxin</keyword>
<keyword id="KW-0862">Zinc</keyword>
<keyword id="KW-0865">Zymogen</keyword>
<evidence type="ECO:0000250" key="1"/>
<evidence type="ECO:0000255" key="2"/>
<evidence type="ECO:0000255" key="3">
    <source>
        <dbReference type="PROSITE-ProRule" id="PRU00276"/>
    </source>
</evidence>
<evidence type="ECO:0000255" key="4">
    <source>
        <dbReference type="PROSITE-ProRule" id="PRU10095"/>
    </source>
</evidence>
<evidence type="ECO:0000305" key="5"/>
<feature type="signal peptide" evidence="2">
    <location>
        <begin position="1"/>
        <end position="20"/>
    </location>
</feature>
<feature type="propeptide" id="PRO_0000340286" evidence="1">
    <location>
        <begin position="21"/>
        <end position="189"/>
    </location>
</feature>
<feature type="chain" id="PRO_0000340287" description="Snake venom metalloproteinase AaPA">
    <location>
        <begin position="190"/>
        <end position="390"/>
    </location>
</feature>
<feature type="propeptide" id="PRO_0000340288" evidence="1">
    <location>
        <begin position="391"/>
        <end position="413"/>
    </location>
</feature>
<feature type="domain" description="Peptidase M12B" evidence="3">
    <location>
        <begin position="193"/>
        <end position="390"/>
    </location>
</feature>
<feature type="active site" evidence="3 4">
    <location>
        <position position="330"/>
    </location>
</feature>
<feature type="binding site" evidence="1">
    <location>
        <position position="196"/>
    </location>
    <ligand>
        <name>Ca(2+)</name>
        <dbReference type="ChEBI" id="CHEBI:29108"/>
        <label>1</label>
    </ligand>
</feature>
<feature type="binding site" evidence="1">
    <location>
        <position position="280"/>
    </location>
    <ligand>
        <name>Ca(2+)</name>
        <dbReference type="ChEBI" id="CHEBI:29108"/>
        <label>1</label>
    </ligand>
</feature>
<feature type="binding site" evidence="1">
    <location>
        <position position="329"/>
    </location>
    <ligand>
        <name>Zn(2+)</name>
        <dbReference type="ChEBI" id="CHEBI:29105"/>
        <note>catalytic</note>
    </ligand>
</feature>
<feature type="binding site" evidence="1">
    <location>
        <position position="333"/>
    </location>
    <ligand>
        <name>Zn(2+)</name>
        <dbReference type="ChEBI" id="CHEBI:29105"/>
        <note>catalytic</note>
    </ligand>
</feature>
<feature type="binding site" evidence="1">
    <location>
        <position position="339"/>
    </location>
    <ligand>
        <name>Zn(2+)</name>
        <dbReference type="ChEBI" id="CHEBI:29105"/>
        <note>catalytic</note>
    </ligand>
</feature>
<feature type="binding site" evidence="1">
    <location>
        <position position="385"/>
    </location>
    <ligand>
        <name>Ca(2+)</name>
        <dbReference type="ChEBI" id="CHEBI:29108"/>
        <label>1</label>
    </ligand>
</feature>
<feature type="binding site" evidence="1">
    <location>
        <position position="388"/>
    </location>
    <ligand>
        <name>Ca(2+)</name>
        <dbReference type="ChEBI" id="CHEBI:29108"/>
        <label>1</label>
    </ligand>
</feature>
<feature type="binding site" evidence="1">
    <location>
        <position position="400"/>
    </location>
    <ligand>
        <name>Ca(2+)</name>
        <dbReference type="ChEBI" id="CHEBI:29108"/>
        <label>2</label>
    </ligand>
</feature>
<feature type="binding site" evidence="1">
    <location>
        <position position="403"/>
    </location>
    <ligand>
        <name>Ca(2+)</name>
        <dbReference type="ChEBI" id="CHEBI:29108"/>
        <label>2</label>
    </ligand>
</feature>
<feature type="binding site" evidence="1">
    <location>
        <position position="405"/>
    </location>
    <ligand>
        <name>Ca(2+)</name>
        <dbReference type="ChEBI" id="CHEBI:29108"/>
        <label>2</label>
    </ligand>
</feature>
<feature type="binding site" evidence="1">
    <location>
        <position position="407"/>
    </location>
    <ligand>
        <name>Ca(2+)</name>
        <dbReference type="ChEBI" id="CHEBI:29108"/>
        <label>2</label>
    </ligand>
</feature>
<feature type="binding site" evidence="1">
    <location>
        <position position="413"/>
    </location>
    <ligand>
        <name>Ca(2+)</name>
        <dbReference type="ChEBI" id="CHEBI:29108"/>
        <label>2</label>
    </ligand>
</feature>
<feature type="disulfide bond" evidence="3">
    <location>
        <begin position="304"/>
        <end position="385"/>
    </location>
</feature>
<feature type="disulfide bond" evidence="3">
    <location>
        <begin position="344"/>
        <end position="369"/>
    </location>
</feature>
<feature type="disulfide bond" evidence="3">
    <location>
        <begin position="346"/>
        <end position="352"/>
    </location>
</feature>
<comment type="function">
    <text>Snake venom zinc metalloprotease that may activate prothrombin.</text>
</comment>
<comment type="cofactor">
    <cofactor evidence="1">
        <name>Zn(2+)</name>
        <dbReference type="ChEBI" id="CHEBI:29105"/>
    </cofactor>
    <text evidence="1">Binds 1 zinc ion per subunit.</text>
</comment>
<comment type="subunit">
    <text evidence="1">Monomer.</text>
</comment>
<comment type="subcellular location">
    <subcellularLocation>
        <location evidence="1">Secreted</location>
    </subcellularLocation>
</comment>
<comment type="tissue specificity">
    <text>Expressed by the venom gland.</text>
</comment>
<comment type="similarity">
    <text evidence="5">Belongs to the venom metalloproteinase (M12B) family. P-I subfamily.</text>
</comment>
<proteinExistence type="evidence at transcript level"/>